<name>PLSX_ENDTX</name>
<dbReference type="EC" id="2.3.1.274" evidence="1"/>
<dbReference type="EMBL" id="AP009510">
    <property type="protein sequence ID" value="BAG14088.1"/>
    <property type="molecule type" value="Genomic_DNA"/>
</dbReference>
<dbReference type="RefSeq" id="WP_015423612.1">
    <property type="nucleotide sequence ID" value="NC_020419.1"/>
</dbReference>
<dbReference type="SMR" id="B1H0Q6"/>
<dbReference type="STRING" id="471821.TGRD_605"/>
<dbReference type="KEGG" id="eti:RSTT_567"/>
<dbReference type="KEGG" id="rsd:TGRD_605"/>
<dbReference type="PATRIC" id="fig|471821.5.peg.994"/>
<dbReference type="HOGENOM" id="CLU_039379_1_1_0"/>
<dbReference type="OrthoDB" id="9806408at2"/>
<dbReference type="UniPathway" id="UPA00085"/>
<dbReference type="Proteomes" id="UP000001691">
    <property type="component" value="Chromosome"/>
</dbReference>
<dbReference type="GO" id="GO:0005737">
    <property type="term" value="C:cytoplasm"/>
    <property type="evidence" value="ECO:0007669"/>
    <property type="project" value="UniProtKB-SubCell"/>
</dbReference>
<dbReference type="GO" id="GO:0043811">
    <property type="term" value="F:phosphate:acyl-[acyl carrier protein] acyltransferase activity"/>
    <property type="evidence" value="ECO:0007669"/>
    <property type="project" value="UniProtKB-UniRule"/>
</dbReference>
<dbReference type="GO" id="GO:0006633">
    <property type="term" value="P:fatty acid biosynthetic process"/>
    <property type="evidence" value="ECO:0007669"/>
    <property type="project" value="UniProtKB-UniRule"/>
</dbReference>
<dbReference type="GO" id="GO:0008654">
    <property type="term" value="P:phospholipid biosynthetic process"/>
    <property type="evidence" value="ECO:0007669"/>
    <property type="project" value="UniProtKB-KW"/>
</dbReference>
<dbReference type="Gene3D" id="3.40.718.10">
    <property type="entry name" value="Isopropylmalate Dehydrogenase"/>
    <property type="match status" value="1"/>
</dbReference>
<dbReference type="HAMAP" id="MF_00019">
    <property type="entry name" value="PlsX"/>
    <property type="match status" value="1"/>
</dbReference>
<dbReference type="InterPro" id="IPR003664">
    <property type="entry name" value="FA_synthesis"/>
</dbReference>
<dbReference type="InterPro" id="IPR012281">
    <property type="entry name" value="Phospholipid_synth_PlsX-like"/>
</dbReference>
<dbReference type="NCBIfam" id="TIGR00182">
    <property type="entry name" value="plsX"/>
    <property type="match status" value="1"/>
</dbReference>
<dbReference type="PANTHER" id="PTHR30100">
    <property type="entry name" value="FATTY ACID/PHOSPHOLIPID SYNTHESIS PROTEIN PLSX"/>
    <property type="match status" value="1"/>
</dbReference>
<dbReference type="PANTHER" id="PTHR30100:SF1">
    <property type="entry name" value="PHOSPHATE ACYLTRANSFERASE"/>
    <property type="match status" value="1"/>
</dbReference>
<dbReference type="Pfam" id="PF02504">
    <property type="entry name" value="FA_synthesis"/>
    <property type="match status" value="1"/>
</dbReference>
<dbReference type="PIRSF" id="PIRSF002465">
    <property type="entry name" value="Phsphlp_syn_PlsX"/>
    <property type="match status" value="1"/>
</dbReference>
<dbReference type="SUPFAM" id="SSF53659">
    <property type="entry name" value="Isocitrate/Isopropylmalate dehydrogenase-like"/>
    <property type="match status" value="1"/>
</dbReference>
<organism>
    <name type="scientific">Endomicrobium trichonymphae</name>
    <dbReference type="NCBI Taxonomy" id="1408204"/>
    <lineage>
        <taxon>Bacteria</taxon>
        <taxon>Pseudomonadati</taxon>
        <taxon>Elusimicrobiota</taxon>
        <taxon>Endomicrobiia</taxon>
        <taxon>Endomicrobiales</taxon>
        <taxon>Endomicrobiaceae</taxon>
        <taxon>Candidatus Endomicrobiellum</taxon>
    </lineage>
</organism>
<feature type="chain" id="PRO_1000089947" description="Phosphate acyltransferase">
    <location>
        <begin position="1"/>
        <end position="338"/>
    </location>
</feature>
<comment type="function">
    <text evidence="1">Catalyzes the reversible formation of acyl-phosphate (acyl-PO(4)) from acyl-[acyl-carrier-protein] (acyl-ACP). This enzyme utilizes acyl-ACP as fatty acyl donor, but not acyl-CoA.</text>
</comment>
<comment type="catalytic activity">
    <reaction evidence="1">
        <text>a fatty acyl-[ACP] + phosphate = an acyl phosphate + holo-[ACP]</text>
        <dbReference type="Rhea" id="RHEA:42292"/>
        <dbReference type="Rhea" id="RHEA-COMP:9685"/>
        <dbReference type="Rhea" id="RHEA-COMP:14125"/>
        <dbReference type="ChEBI" id="CHEBI:43474"/>
        <dbReference type="ChEBI" id="CHEBI:59918"/>
        <dbReference type="ChEBI" id="CHEBI:64479"/>
        <dbReference type="ChEBI" id="CHEBI:138651"/>
        <dbReference type="EC" id="2.3.1.274"/>
    </reaction>
</comment>
<comment type="pathway">
    <text evidence="1">Lipid metabolism; phospholipid metabolism.</text>
</comment>
<comment type="subunit">
    <text evidence="1">Homodimer. Probably interacts with PlsY.</text>
</comment>
<comment type="subcellular location">
    <subcellularLocation>
        <location evidence="1">Cytoplasm</location>
    </subcellularLocation>
    <text evidence="1">Associated with the membrane possibly through PlsY.</text>
</comment>
<comment type="similarity">
    <text evidence="1">Belongs to the PlsX family.</text>
</comment>
<gene>
    <name evidence="1" type="primary">plsX</name>
    <name type="ordered locus">TGRD_605</name>
</gene>
<protein>
    <recommendedName>
        <fullName evidence="1">Phosphate acyltransferase</fullName>
        <ecNumber evidence="1">2.3.1.274</ecNumber>
    </recommendedName>
    <alternativeName>
        <fullName evidence="1">Acyl-ACP phosphotransacylase</fullName>
    </alternativeName>
    <alternativeName>
        <fullName evidence="1">Acyl-[acyl-carrier-protein]--phosphate acyltransferase</fullName>
    </alternativeName>
    <alternativeName>
        <fullName evidence="1">Phosphate-acyl-ACP acyltransferase</fullName>
    </alternativeName>
</protein>
<accession>B1H0Q6</accession>
<reference key="1">
    <citation type="journal article" date="2008" name="Proc. Natl. Acad. Sci. U.S.A.">
        <title>Complete genome of the uncultured termite group 1 bacteria in a single host protist cell.</title>
        <authorList>
            <person name="Hongoh Y."/>
            <person name="Sharma V.K."/>
            <person name="Prakash T."/>
            <person name="Noda S."/>
            <person name="Taylor T.D."/>
            <person name="Kudo T."/>
            <person name="Sakaki Y."/>
            <person name="Toyoda A."/>
            <person name="Hattori M."/>
            <person name="Ohkuma M."/>
        </authorList>
    </citation>
    <scope>NUCLEOTIDE SEQUENCE [LARGE SCALE GENOMIC DNA]</scope>
</reference>
<evidence type="ECO:0000255" key="1">
    <source>
        <dbReference type="HAMAP-Rule" id="MF_00019"/>
    </source>
</evidence>
<keyword id="KW-0963">Cytoplasm</keyword>
<keyword id="KW-0444">Lipid biosynthesis</keyword>
<keyword id="KW-0443">Lipid metabolism</keyword>
<keyword id="KW-0594">Phospholipid biosynthesis</keyword>
<keyword id="KW-1208">Phospholipid metabolism</keyword>
<keyword id="KW-0808">Transferase</keyword>
<proteinExistence type="inferred from homology"/>
<sequence>MIIALDAMGGDFAPASTVEGAIFAAKESKHKILLVGIEKILVGELLKYRGRYDLKSLNIEIINATEFITMDEHPAKAVRQKKDSSLSVCARLVADGKADAFVSMGNSGAAMSAALFYLKRIEGVLRPAISTVFPNFGGHCIIADMGANVDCTPEYLLQFGIMASLFCEKVASVENPRVGLVSIGEESTKGNELTLAAFELLKKADINFIGNVEGRDIPGGKVDVAICDGFVGNVILKLGEGLTEMMLKLIRKEFKQHPMTWASLPFLWLAIKDLRKRVDYSEFGGAPLLGVEGVCIIGHGSSNGKAVKNAIFAGAETAKHNIAAGIKEAILRYNNKVV</sequence>